<organism>
    <name type="scientific">Rattus norvegicus</name>
    <name type="common">Rat</name>
    <dbReference type="NCBI Taxonomy" id="10116"/>
    <lineage>
        <taxon>Eukaryota</taxon>
        <taxon>Metazoa</taxon>
        <taxon>Chordata</taxon>
        <taxon>Craniata</taxon>
        <taxon>Vertebrata</taxon>
        <taxon>Euteleostomi</taxon>
        <taxon>Mammalia</taxon>
        <taxon>Eutheria</taxon>
        <taxon>Euarchontoglires</taxon>
        <taxon>Glires</taxon>
        <taxon>Rodentia</taxon>
        <taxon>Myomorpha</taxon>
        <taxon>Muroidea</taxon>
        <taxon>Muridae</taxon>
        <taxon>Murinae</taxon>
        <taxon>Rattus</taxon>
    </lineage>
</organism>
<name>STX2_RAT</name>
<dbReference type="EMBL" id="L20823">
    <property type="protein sequence ID" value="AAA03044.1"/>
    <property type="molecule type" value="mRNA"/>
</dbReference>
<dbReference type="EMBL" id="L20889">
    <property type="protein sequence ID" value="AAA03049.1"/>
    <property type="molecule type" value="mRNA"/>
</dbReference>
<dbReference type="EMBL" id="L20888">
    <property type="protein sequence ID" value="AAA03048.1"/>
    <property type="molecule type" value="mRNA"/>
</dbReference>
<dbReference type="EMBL" id="AH006759">
    <property type="protein sequence ID" value="AAC52908.1"/>
    <property type="molecule type" value="Genomic_DNA"/>
</dbReference>
<dbReference type="PIR" id="C48213">
    <property type="entry name" value="C48213"/>
</dbReference>
<dbReference type="RefSeq" id="NP_001402680.1">
    <molecule id="P50279-2"/>
    <property type="nucleotide sequence ID" value="NM_001415751.1"/>
</dbReference>
<dbReference type="RefSeq" id="NP_036880.1">
    <property type="nucleotide sequence ID" value="NM_012748.1"/>
</dbReference>
<dbReference type="RefSeq" id="XP_006249312.1">
    <property type="nucleotide sequence ID" value="XM_006249250.3"/>
</dbReference>
<dbReference type="RefSeq" id="XP_038945029.1">
    <molecule id="P50279-3"/>
    <property type="nucleotide sequence ID" value="XM_039089101.2"/>
</dbReference>
<dbReference type="SMR" id="P50279"/>
<dbReference type="BioGRID" id="247200">
    <property type="interactions" value="4"/>
</dbReference>
<dbReference type="CORUM" id="P50279"/>
<dbReference type="DIP" id="DIP-347N"/>
<dbReference type="FunCoup" id="P50279">
    <property type="interactions" value="502"/>
</dbReference>
<dbReference type="STRING" id="10116.ENSRNOP00000001242"/>
<dbReference type="iPTMnet" id="P50279"/>
<dbReference type="PhosphoSitePlus" id="P50279"/>
<dbReference type="PaxDb" id="10116-ENSRNOP00000001242"/>
<dbReference type="Ensembl" id="ENSRNOT00000099417.1">
    <molecule id="P50279-2"/>
    <property type="protein sequence ID" value="ENSRNOP00000085955.1"/>
    <property type="gene ID" value="ENSRNOG00000000936.7"/>
</dbReference>
<dbReference type="GeneID" id="25130"/>
<dbReference type="KEGG" id="rno:25130"/>
<dbReference type="UCSC" id="RGD:2558">
    <molecule id="P50279-1"/>
    <property type="organism name" value="rat"/>
</dbReference>
<dbReference type="AGR" id="RGD:2558"/>
<dbReference type="CTD" id="2054"/>
<dbReference type="RGD" id="2558">
    <property type="gene designation" value="Stx2"/>
</dbReference>
<dbReference type="eggNOG" id="KOG0810">
    <property type="taxonomic scope" value="Eukaryota"/>
</dbReference>
<dbReference type="GeneTree" id="ENSGT01030000234627"/>
<dbReference type="HOGENOM" id="CLU_042423_2_2_1"/>
<dbReference type="InParanoid" id="P50279"/>
<dbReference type="PhylomeDB" id="P50279"/>
<dbReference type="PRO" id="PR:P50279"/>
<dbReference type="Proteomes" id="UP000002494">
    <property type="component" value="Chromosome 12"/>
</dbReference>
<dbReference type="GO" id="GO:0016323">
    <property type="term" value="C:basolateral plasma membrane"/>
    <property type="evidence" value="ECO:0000266"/>
    <property type="project" value="RGD"/>
</dbReference>
<dbReference type="GO" id="GO:0009986">
    <property type="term" value="C:cell surface"/>
    <property type="evidence" value="ECO:0000266"/>
    <property type="project" value="RGD"/>
</dbReference>
<dbReference type="GO" id="GO:0005911">
    <property type="term" value="C:cell-cell junction"/>
    <property type="evidence" value="ECO:0000266"/>
    <property type="project" value="RGD"/>
</dbReference>
<dbReference type="GO" id="GO:0031410">
    <property type="term" value="C:cytoplasmic vesicle"/>
    <property type="evidence" value="ECO:0000266"/>
    <property type="project" value="RGD"/>
</dbReference>
<dbReference type="GO" id="GO:0012505">
    <property type="term" value="C:endomembrane system"/>
    <property type="evidence" value="ECO:0000318"/>
    <property type="project" value="GO_Central"/>
</dbReference>
<dbReference type="GO" id="GO:0005615">
    <property type="term" value="C:extracellular space"/>
    <property type="evidence" value="ECO:0000266"/>
    <property type="project" value="RGD"/>
</dbReference>
<dbReference type="GO" id="GO:0030027">
    <property type="term" value="C:lamellipodium"/>
    <property type="evidence" value="ECO:0000266"/>
    <property type="project" value="RGD"/>
</dbReference>
<dbReference type="GO" id="GO:0045121">
    <property type="term" value="C:membrane raft"/>
    <property type="evidence" value="ECO:0000266"/>
    <property type="project" value="RGD"/>
</dbReference>
<dbReference type="GO" id="GO:0030496">
    <property type="term" value="C:midbody"/>
    <property type="evidence" value="ECO:0000314"/>
    <property type="project" value="RGD"/>
</dbReference>
<dbReference type="GO" id="GO:0005886">
    <property type="term" value="C:plasma membrane"/>
    <property type="evidence" value="ECO:0000266"/>
    <property type="project" value="RGD"/>
</dbReference>
<dbReference type="GO" id="GO:0048787">
    <property type="term" value="C:presynaptic active zone membrane"/>
    <property type="evidence" value="ECO:0000318"/>
    <property type="project" value="GO_Central"/>
</dbReference>
<dbReference type="GO" id="GO:0032991">
    <property type="term" value="C:protein-containing complex"/>
    <property type="evidence" value="ECO:0000266"/>
    <property type="project" value="RGD"/>
</dbReference>
<dbReference type="GO" id="GO:0031201">
    <property type="term" value="C:SNARE complex"/>
    <property type="evidence" value="ECO:0000318"/>
    <property type="project" value="GO_Central"/>
</dbReference>
<dbReference type="GO" id="GO:0045202">
    <property type="term" value="C:synapse"/>
    <property type="evidence" value="ECO:0000314"/>
    <property type="project" value="SynGO"/>
</dbReference>
<dbReference type="GO" id="GO:0048306">
    <property type="term" value="F:calcium-dependent protein binding"/>
    <property type="evidence" value="ECO:0000266"/>
    <property type="project" value="RGD"/>
</dbReference>
<dbReference type="GO" id="GO:0005484">
    <property type="term" value="F:SNAP receptor activity"/>
    <property type="evidence" value="ECO:0000318"/>
    <property type="project" value="GO_Central"/>
</dbReference>
<dbReference type="GO" id="GO:0000149">
    <property type="term" value="F:SNARE binding"/>
    <property type="evidence" value="ECO:0000315"/>
    <property type="project" value="RGD"/>
</dbReference>
<dbReference type="GO" id="GO:0005198">
    <property type="term" value="F:structural molecule activity"/>
    <property type="evidence" value="ECO:0000266"/>
    <property type="project" value="RGD"/>
</dbReference>
<dbReference type="GO" id="GO:0007340">
    <property type="term" value="P:acrosome reaction"/>
    <property type="evidence" value="ECO:0000266"/>
    <property type="project" value="RGD"/>
</dbReference>
<dbReference type="GO" id="GO:0030154">
    <property type="term" value="P:cell differentiation"/>
    <property type="evidence" value="ECO:0000266"/>
    <property type="project" value="RGD"/>
</dbReference>
<dbReference type="GO" id="GO:0034599">
    <property type="term" value="P:cellular response to oxidative stress"/>
    <property type="evidence" value="ECO:0000266"/>
    <property type="project" value="RGD"/>
</dbReference>
<dbReference type="GO" id="GO:1903575">
    <property type="term" value="P:cornified envelope assembly"/>
    <property type="evidence" value="ECO:0000266"/>
    <property type="project" value="RGD"/>
</dbReference>
<dbReference type="GO" id="GO:0048546">
    <property type="term" value="P:digestive tract morphogenesis"/>
    <property type="evidence" value="ECO:0000315"/>
    <property type="project" value="RGD"/>
</dbReference>
<dbReference type="GO" id="GO:0030855">
    <property type="term" value="P:epithelial cell differentiation"/>
    <property type="evidence" value="ECO:0000315"/>
    <property type="project" value="RGD"/>
</dbReference>
<dbReference type="GO" id="GO:0006887">
    <property type="term" value="P:exocytosis"/>
    <property type="evidence" value="ECO:0000318"/>
    <property type="project" value="GO_Central"/>
</dbReference>
<dbReference type="GO" id="GO:0006886">
    <property type="term" value="P:intracellular protein transport"/>
    <property type="evidence" value="ECO:0000318"/>
    <property type="project" value="GO_Central"/>
</dbReference>
<dbReference type="GO" id="GO:0046907">
    <property type="term" value="P:intracellular transport"/>
    <property type="evidence" value="ECO:0000304"/>
    <property type="project" value="RGD"/>
</dbReference>
<dbReference type="GO" id="GO:0030033">
    <property type="term" value="P:microvillus assembly"/>
    <property type="evidence" value="ECO:0000314"/>
    <property type="project" value="RGD"/>
</dbReference>
<dbReference type="GO" id="GO:0061952">
    <property type="term" value="P:midbody abscission"/>
    <property type="evidence" value="ECO:0000315"/>
    <property type="project" value="CACAO"/>
</dbReference>
<dbReference type="GO" id="GO:0000281">
    <property type="term" value="P:mitotic cytokinesis"/>
    <property type="evidence" value="ECO:0000315"/>
    <property type="project" value="CACAO"/>
</dbReference>
<dbReference type="GO" id="GO:0031629">
    <property type="term" value="P:synaptic vesicle fusion to presynaptic active zone membrane"/>
    <property type="evidence" value="ECO:0000318"/>
    <property type="project" value="GO_Central"/>
</dbReference>
<dbReference type="GO" id="GO:0048278">
    <property type="term" value="P:vesicle docking"/>
    <property type="evidence" value="ECO:0000318"/>
    <property type="project" value="GO_Central"/>
</dbReference>
<dbReference type="GO" id="GO:0006906">
    <property type="term" value="P:vesicle fusion"/>
    <property type="evidence" value="ECO:0000304"/>
    <property type="project" value="RGD"/>
</dbReference>
<dbReference type="GO" id="GO:0006903">
    <property type="term" value="P:vesicle targeting"/>
    <property type="evidence" value="ECO:0000304"/>
    <property type="project" value="RGD"/>
</dbReference>
<dbReference type="GO" id="GO:0016192">
    <property type="term" value="P:vesicle-mediated transport"/>
    <property type="evidence" value="ECO:0000304"/>
    <property type="project" value="RGD"/>
</dbReference>
<dbReference type="CDD" id="cd15882">
    <property type="entry name" value="SNARE_syntaxin2"/>
    <property type="match status" value="1"/>
</dbReference>
<dbReference type="CDD" id="cd00179">
    <property type="entry name" value="SynN"/>
    <property type="match status" value="1"/>
</dbReference>
<dbReference type="FunFam" id="1.20.5.110:FF:000005">
    <property type="entry name" value="Syntaxin 1B"/>
    <property type="match status" value="1"/>
</dbReference>
<dbReference type="FunFam" id="1.20.58.70:FF:000001">
    <property type="entry name" value="Syntaxin 3"/>
    <property type="match status" value="1"/>
</dbReference>
<dbReference type="Gene3D" id="1.20.5.110">
    <property type="match status" value="1"/>
</dbReference>
<dbReference type="Gene3D" id="1.20.58.70">
    <property type="match status" value="1"/>
</dbReference>
<dbReference type="InterPro" id="IPR010989">
    <property type="entry name" value="SNARE"/>
</dbReference>
<dbReference type="InterPro" id="IPR028671">
    <property type="entry name" value="STX2_SNARE"/>
</dbReference>
<dbReference type="InterPro" id="IPR045242">
    <property type="entry name" value="Syntaxin"/>
</dbReference>
<dbReference type="InterPro" id="IPR006012">
    <property type="entry name" value="Syntaxin/epimorphin_CS"/>
</dbReference>
<dbReference type="InterPro" id="IPR006011">
    <property type="entry name" value="Syntaxin_N"/>
</dbReference>
<dbReference type="InterPro" id="IPR000727">
    <property type="entry name" value="T_SNARE_dom"/>
</dbReference>
<dbReference type="PANTHER" id="PTHR19957">
    <property type="entry name" value="SYNTAXIN"/>
    <property type="match status" value="1"/>
</dbReference>
<dbReference type="PANTHER" id="PTHR19957:SF36">
    <property type="entry name" value="SYNTAXIN-2"/>
    <property type="match status" value="1"/>
</dbReference>
<dbReference type="Pfam" id="PF05739">
    <property type="entry name" value="SNARE"/>
    <property type="match status" value="1"/>
</dbReference>
<dbReference type="Pfam" id="PF00804">
    <property type="entry name" value="Syntaxin"/>
    <property type="match status" value="1"/>
</dbReference>
<dbReference type="SMART" id="SM00503">
    <property type="entry name" value="SynN"/>
    <property type="match status" value="1"/>
</dbReference>
<dbReference type="SMART" id="SM00397">
    <property type="entry name" value="t_SNARE"/>
    <property type="match status" value="1"/>
</dbReference>
<dbReference type="SUPFAM" id="SSF47661">
    <property type="entry name" value="t-snare proteins"/>
    <property type="match status" value="1"/>
</dbReference>
<dbReference type="PROSITE" id="PS00914">
    <property type="entry name" value="SYNTAXIN"/>
    <property type="match status" value="1"/>
</dbReference>
<dbReference type="PROSITE" id="PS50192">
    <property type="entry name" value="T_SNARE"/>
    <property type="match status" value="1"/>
</dbReference>
<feature type="chain" id="PRO_0000210198" description="Syntaxin-2">
    <location>
        <begin position="1"/>
        <end position="290"/>
    </location>
</feature>
<feature type="topological domain" description="Cytoplasmic" evidence="1">
    <location>
        <begin position="1"/>
        <end position="266"/>
    </location>
</feature>
<feature type="transmembrane region" description="Helical; Anchor for type IV membrane protein" evidence="1">
    <location>
        <begin position="267"/>
        <end position="290"/>
    </location>
</feature>
<feature type="domain" description="t-SNARE coiled-coil homology" evidence="2">
    <location>
        <begin position="193"/>
        <end position="255"/>
    </location>
</feature>
<feature type="coiled-coil region" evidence="1">
    <location>
        <begin position="69"/>
        <end position="106"/>
    </location>
</feature>
<feature type="modified residue" description="Phosphoserine" evidence="5">
    <location>
        <position position="14"/>
    </location>
</feature>
<feature type="splice variant" id="VSP_006336" description="In isoform 2B." evidence="3">
    <original>KKWIIAAVVVAVIAVLALIIGLTVGK</original>
    <variation>KVMFVLICVVTLLVILGIILATALS</variation>
    <location>
        <begin position="265"/>
        <end position="290"/>
    </location>
</feature>
<feature type="splice variant" id="VSP_006337" description="In isoform 2C." evidence="3">
    <original>KKWIIAAVVVAVIAVLALIIGLTVGK</original>
    <variation>GVLCALGRQC</variation>
    <location>
        <begin position="265"/>
        <end position="290"/>
    </location>
</feature>
<feature type="sequence conflict" description="In Ref. 2; AAC52908." evidence="4" ref="2">
    <original>S</original>
    <variation>R</variation>
    <location>
        <position position="146"/>
    </location>
</feature>
<feature type="sequence conflict" description="In Ref. 2; AAC52908." evidence="4" ref="2">
    <original>T</original>
    <variation>S</variation>
    <location>
        <position position="287"/>
    </location>
</feature>
<comment type="function">
    <text>Essential for epithelial morphogenesis. May mediate Ca(2+)-regulation of exocytosis acrosomal reaction in sperm.</text>
</comment>
<comment type="subunit">
    <text>Interacts with SYT6 and SYT8; the interaction is Ca(2+)-dependent.</text>
</comment>
<comment type="subcellular location">
    <subcellularLocation>
        <location>Membrane</location>
        <topology>Single-pass type IV membrane protein</topology>
    </subcellularLocation>
</comment>
<comment type="alternative products">
    <event type="alternative splicing"/>
    <isoform>
        <id>P50279-1</id>
        <name>2A</name>
        <sequence type="displayed"/>
    </isoform>
    <isoform>
        <id>P50279-2</id>
        <name>2B</name>
        <name>2'</name>
        <sequence type="described" ref="VSP_006336"/>
    </isoform>
    <isoform>
        <id>P50279-3</id>
        <name>2C</name>
        <name>2''</name>
        <sequence type="described" ref="VSP_006337"/>
    </isoform>
    <text>Additional isoforms seem to exist.</text>
</comment>
<comment type="tissue specificity">
    <text>Heart, spleen, liver, and testis.</text>
</comment>
<comment type="similarity">
    <text evidence="4">Belongs to the syntaxin family.</text>
</comment>
<gene>
    <name type="primary">Stx2</name>
    <name type="synonym">Epim</name>
</gene>
<accession>P50279</accession>
<accession>Q08846</accession>
<accession>Q08847</accession>
<accession>Q08848</accession>
<sequence>MRDRLPDLTACRKSDDGDNAVIITVEKDHFMDAFFHQVEEIRSSIARIAQHVEDVKKNHSIILSAPNPEGKIKEELEDLNKEIKKTANRIRGKLKAIEQSCDQDENGNRTSVDLRIRRTQHSVLSRKFVDVMTEYNEAQILFRERSKGRIQRQLEITGRTTTDEELEEMLESGKPSIFISDIISDSQITRQALNEIESRHKDIMKLETSIRELHEMFMDMAMFVETQGEMVNNIERNVVNSVDYVEHAKEETKKAIKYQSKARRKKWIIAAVVVAVIAVLALIIGLTVGK</sequence>
<keyword id="KW-0025">Alternative splicing</keyword>
<keyword id="KW-0175">Coiled coil</keyword>
<keyword id="KW-0472">Membrane</keyword>
<keyword id="KW-0597">Phosphoprotein</keyword>
<keyword id="KW-1185">Reference proteome</keyword>
<keyword id="KW-0812">Transmembrane</keyword>
<keyword id="KW-1133">Transmembrane helix</keyword>
<protein>
    <recommendedName>
        <fullName>Syntaxin-2</fullName>
    </recommendedName>
    <alternativeName>
        <fullName>Epimorphin</fullName>
    </alternativeName>
</protein>
<proteinExistence type="evidence at protein level"/>
<reference key="1">
    <citation type="journal article" date="1993" name="Cell">
        <title>The syntaxin family of vesicular transport receptors.</title>
        <authorList>
            <person name="Bennett M.K."/>
            <person name="Garcia-Arraras J.E."/>
            <person name="Elferink L.A."/>
            <person name="Peterson K.E."/>
            <person name="Fleming A.M."/>
            <person name="Hazuka C.D."/>
            <person name="Scheller R.H."/>
        </authorList>
    </citation>
    <scope>NUCLEOTIDE SEQUENCE [MRNA] (ISOFORMS 2B AND 2C)</scope>
</reference>
<reference key="2">
    <citation type="journal article" date="1996" name="Genomics">
        <title>The epimorphin gene is highly conserved among humans, mice, and rats and maps to human chromosome 7, mouse chromosome 5, and rat chromosome 12.</title>
        <authorList>
            <person name="Zha H."/>
            <person name="Remmers E.F."/>
            <person name="Szpirer C."/>
            <person name="Szpirer J."/>
            <person name="Zhang H."/>
            <person name="Kozak C.A."/>
            <person name="Wilder R.L."/>
        </authorList>
    </citation>
    <scope>NUCLEOTIDE SEQUENCE [GENOMIC DNA] OF 11-290</scope>
    <source>
        <strain>Sprague-Dawley</strain>
        <tissue>Liver</tissue>
    </source>
</reference>
<reference key="3">
    <citation type="journal article" date="2012" name="Nat. Commun.">
        <title>Quantitative maps of protein phosphorylation sites across 14 different rat organs and tissues.</title>
        <authorList>
            <person name="Lundby A."/>
            <person name="Secher A."/>
            <person name="Lage K."/>
            <person name="Nordsborg N.B."/>
            <person name="Dmytriyev A."/>
            <person name="Lundby C."/>
            <person name="Olsen J.V."/>
        </authorList>
    </citation>
    <scope>PHOSPHORYLATION [LARGE SCALE ANALYSIS] AT SER-14</scope>
    <scope>IDENTIFICATION BY MASS SPECTROMETRY [LARGE SCALE ANALYSIS]</scope>
</reference>
<evidence type="ECO:0000255" key="1"/>
<evidence type="ECO:0000255" key="2">
    <source>
        <dbReference type="PROSITE-ProRule" id="PRU00202"/>
    </source>
</evidence>
<evidence type="ECO:0000303" key="3">
    <source>
    </source>
</evidence>
<evidence type="ECO:0000305" key="4"/>
<evidence type="ECO:0007744" key="5">
    <source>
    </source>
</evidence>